<name>CACP_COLLI</name>
<feature type="propeptide" id="PRO_0000004428">
    <location>
        <begin position="1"/>
        <end position="30"/>
    </location>
</feature>
<feature type="chain" id="PRO_0000004429" description="Carnitine O-acetyltransferase">
    <location>
        <begin position="31"/>
        <end position="627"/>
    </location>
</feature>
<feature type="short sequence motif" description="Microbody targeting signal" evidence="4">
    <location>
        <begin position="625"/>
        <end position="627"/>
    </location>
</feature>
<feature type="active site" description="Proton acceptor" evidence="2">
    <location>
        <position position="344"/>
    </location>
</feature>
<feature type="binding site" evidence="3">
    <location>
        <position position="420"/>
    </location>
    <ligand>
        <name>CoA</name>
        <dbReference type="ChEBI" id="CHEBI:57287"/>
    </ligand>
</feature>
<feature type="binding site" evidence="3">
    <location>
        <begin position="424"/>
        <end position="431"/>
    </location>
    <ligand>
        <name>CoA</name>
        <dbReference type="ChEBI" id="CHEBI:57287"/>
    </ligand>
</feature>
<feature type="binding site" evidence="2">
    <location>
        <position position="453"/>
    </location>
    <ligand>
        <name>(R)-carnitine</name>
        <dbReference type="ChEBI" id="CHEBI:16347"/>
    </ligand>
</feature>
<feature type="binding site" evidence="2">
    <location>
        <position position="455"/>
    </location>
    <ligand>
        <name>(R)-carnitine</name>
        <dbReference type="ChEBI" id="CHEBI:16347"/>
    </ligand>
</feature>
<feature type="binding site" evidence="3">
    <location>
        <position position="457"/>
    </location>
    <ligand>
        <name>CoA</name>
        <dbReference type="ChEBI" id="CHEBI:57287"/>
    </ligand>
</feature>
<feature type="binding site" evidence="2">
    <location>
        <position position="466"/>
    </location>
    <ligand>
        <name>(R)-carnitine</name>
        <dbReference type="ChEBI" id="CHEBI:16347"/>
    </ligand>
</feature>
<feature type="binding site" evidence="3">
    <location>
        <position position="556"/>
    </location>
    <ligand>
        <name>CoA</name>
        <dbReference type="ChEBI" id="CHEBI:57287"/>
    </ligand>
</feature>
<feature type="modified residue" description="N6-succinyllysine" evidence="3">
    <location>
        <position position="94"/>
    </location>
</feature>
<feature type="modified residue" description="N6-acetyllysine; alternate" evidence="2">
    <location>
        <position position="262"/>
    </location>
</feature>
<feature type="modified residue" description="N6-succinyllysine; alternate" evidence="3">
    <location>
        <position position="262"/>
    </location>
</feature>
<feature type="modified residue" description="N6-acetyllysine" evidence="2">
    <location>
        <position position="269"/>
    </location>
</feature>
<accession>P52826</accession>
<evidence type="ECO:0000250" key="1"/>
<evidence type="ECO:0000250" key="2">
    <source>
        <dbReference type="UniProtKB" id="P43155"/>
    </source>
</evidence>
<evidence type="ECO:0000250" key="3">
    <source>
        <dbReference type="UniProtKB" id="P47934"/>
    </source>
</evidence>
<evidence type="ECO:0000255" key="4"/>
<evidence type="ECO:0000305" key="5"/>
<gene>
    <name type="primary">CRAT</name>
</gene>
<keyword id="KW-0007">Acetylation</keyword>
<keyword id="KW-0012">Acyltransferase</keyword>
<keyword id="KW-0903">Direct protein sequencing</keyword>
<keyword id="KW-0256">Endoplasmic reticulum</keyword>
<keyword id="KW-0276">Fatty acid metabolism</keyword>
<keyword id="KW-0443">Lipid metabolism</keyword>
<keyword id="KW-0472">Membrane</keyword>
<keyword id="KW-0496">Mitochondrion</keyword>
<keyword id="KW-0999">Mitochondrion inner membrane</keyword>
<keyword id="KW-0576">Peroxisome</keyword>
<keyword id="KW-0808">Transferase</keyword>
<keyword id="KW-0813">Transport</keyword>
<protein>
    <recommendedName>
        <fullName evidence="5">Carnitine O-acetyltransferase</fullName>
        <shortName>Carnitine acetylase</shortName>
        <ecNumber evidence="2">2.3.1.137</ecNumber>
        <ecNumber evidence="2">2.3.1.7</ecNumber>
    </recommendedName>
    <alternativeName>
        <fullName>Carnitine acetyltransferase</fullName>
        <shortName>CAT</shortName>
        <shortName>CrAT</shortName>
    </alternativeName>
</protein>
<reference key="1">
    <citation type="journal article" date="1995" name="Biochem. J.">
        <title>Cloning, sequencing and heterologous expression of a cDNA encoding pigeon liver carnitine acetyltransferase.</title>
        <authorList>
            <person name="Johnson T.M."/>
            <person name="Kocher H.P."/>
            <person name="Anderson R.C."/>
            <person name="Nemecek G.M."/>
        </authorList>
    </citation>
    <scope>NUCLEOTIDE SEQUENCE [MRNA]</scope>
    <scope>PARTIAL PROTEIN SEQUENCE</scope>
    <source>
        <tissue>Liver</tissue>
        <tissue>Pectoralis muscle</tissue>
    </source>
</reference>
<sequence>MDRKQKQAEKARPYGLLKPAALGKIPGRFQLHQEALPHLPVPPLQQTLDRYLLALQPIISEEELNHTQELVAEFRKPGGVGERLQKGLERRAKKTDNWLSDWWLKTAYLEYRLPVVVHSSPGVVLPKQDFQDRQGQLRFAAKLIEGILDFKTMIDNETLPVEYMGGKPLCMNQYYQILSSCRIPGPKRDSIVNYAKGKKQSRHITVVHNFQFFELDVYNSDGSPLTTDQLFIQLEKIWNTSLQTNKEPVGILTTNHRNSWAKAYNNLLKDKTNKESVRTIEKSICTICLDAPMPRVSDDIYKSPVAAQMLHGGGSRWNSGNRWFDKTLQFIIAEDGSCGLVYEHAPAEGPPIVALLDHIVEYTKKPELVRSPMIPLPMPKKLRFNITPEIKSDIEKAKQNLNIMVEDLDVIVLVFHQFGKNYPKSEKISPDAFIQLALQLAYYRMYGHSCATYESASLRMFRLGRTDTIRSTSIESHKFVQSMDSPDKSDQEKADLLRRATQAHKEYTNMAIQGNAIDRHLLGLKLQAIEDLVSIPELFMDTAYAVAMHFNLSTSQVPAKTDCVMCFGPVVPDGYGICYNPMGEHINFAISAFNSCADTNAARMAHYLEKALLDMRSLLQSAPKSKL</sequence>
<comment type="function">
    <text evidence="2">Catalyzes the reversible transfer of acyl groups from carnitine to coenzyme A (CoA) and regulates the acyl-CoA/CoA ratio. Also plays a crucial role in the transport of fatty acids for beta-oxidation. Responsible for the synthesis of short- and branched-chain acylcarnitines. Active towards some branched-chain amino acid oxidation pathway (BCAAO) intermediates. Trans-2-enoyl-CoAs and 2-methylacyl-CoAs are poor substrates.</text>
</comment>
<comment type="catalytic activity">
    <reaction evidence="2">
        <text>(R)-carnitine + acetyl-CoA = O-acetyl-(R)-carnitine + CoA</text>
        <dbReference type="Rhea" id="RHEA:21136"/>
        <dbReference type="ChEBI" id="CHEBI:16347"/>
        <dbReference type="ChEBI" id="CHEBI:57287"/>
        <dbReference type="ChEBI" id="CHEBI:57288"/>
        <dbReference type="ChEBI" id="CHEBI:57589"/>
        <dbReference type="EC" id="2.3.1.7"/>
    </reaction>
    <physiologicalReaction direction="left-to-right" evidence="2">
        <dbReference type="Rhea" id="RHEA:21137"/>
    </physiologicalReaction>
</comment>
<comment type="catalytic activity">
    <reaction evidence="2">
        <text>propanoyl-CoA + (R)-carnitine = O-propanoyl-(R)-carnitine + CoA</text>
        <dbReference type="Rhea" id="RHEA:44976"/>
        <dbReference type="ChEBI" id="CHEBI:16347"/>
        <dbReference type="ChEBI" id="CHEBI:53210"/>
        <dbReference type="ChEBI" id="CHEBI:57287"/>
        <dbReference type="ChEBI" id="CHEBI:57392"/>
    </reaction>
    <physiologicalReaction direction="left-to-right" evidence="2">
        <dbReference type="Rhea" id="RHEA:44977"/>
    </physiologicalReaction>
</comment>
<comment type="catalytic activity">
    <reaction evidence="2">
        <text>butanoyl-CoA + (R)-carnitine = O-butanoyl-(R)-carnitine + CoA</text>
        <dbReference type="Rhea" id="RHEA:44980"/>
        <dbReference type="ChEBI" id="CHEBI:16347"/>
        <dbReference type="ChEBI" id="CHEBI:21949"/>
        <dbReference type="ChEBI" id="CHEBI:57287"/>
        <dbReference type="ChEBI" id="CHEBI:57371"/>
    </reaction>
    <physiologicalReaction direction="left-to-right" evidence="2">
        <dbReference type="Rhea" id="RHEA:44981"/>
    </physiologicalReaction>
</comment>
<comment type="catalytic activity">
    <reaction evidence="2">
        <text>hexanoyl-CoA + (R)-carnitine = O-hexanoyl-(R)-carnitine + CoA</text>
        <dbReference type="Rhea" id="RHEA:44972"/>
        <dbReference type="ChEBI" id="CHEBI:16347"/>
        <dbReference type="ChEBI" id="CHEBI:57287"/>
        <dbReference type="ChEBI" id="CHEBI:62620"/>
        <dbReference type="ChEBI" id="CHEBI:84834"/>
    </reaction>
    <physiologicalReaction direction="left-to-right" evidence="2">
        <dbReference type="Rhea" id="RHEA:44973"/>
    </physiologicalReaction>
</comment>
<comment type="catalytic activity">
    <reaction evidence="2">
        <text>octanoyl-CoA + (R)-carnitine = O-octanoyl-(R)-carnitine + CoA</text>
        <dbReference type="Rhea" id="RHEA:17177"/>
        <dbReference type="ChEBI" id="CHEBI:16347"/>
        <dbReference type="ChEBI" id="CHEBI:18102"/>
        <dbReference type="ChEBI" id="CHEBI:57287"/>
        <dbReference type="ChEBI" id="CHEBI:57386"/>
        <dbReference type="EC" id="2.3.1.137"/>
    </reaction>
    <physiologicalReaction direction="left-to-right" evidence="2">
        <dbReference type="Rhea" id="RHEA:17178"/>
    </physiologicalReaction>
</comment>
<comment type="catalytic activity">
    <reaction evidence="2">
        <text>decanoyl-CoA + (R)-carnitine = O-decanoyl-(R)-carnitine + CoA</text>
        <dbReference type="Rhea" id="RHEA:44828"/>
        <dbReference type="ChEBI" id="CHEBI:16347"/>
        <dbReference type="ChEBI" id="CHEBI:28717"/>
        <dbReference type="ChEBI" id="CHEBI:57287"/>
        <dbReference type="ChEBI" id="CHEBI:61430"/>
    </reaction>
    <physiologicalReaction direction="left-to-right" evidence="2">
        <dbReference type="Rhea" id="RHEA:44829"/>
    </physiologicalReaction>
</comment>
<comment type="catalytic activity">
    <reaction evidence="2">
        <text>3-methylbutanoyl-CoA + (R)-carnitine = O-3-methylbutanoyl-(R)-carnitine + CoA</text>
        <dbReference type="Rhea" id="RHEA:44984"/>
        <dbReference type="ChEBI" id="CHEBI:16347"/>
        <dbReference type="ChEBI" id="CHEBI:57287"/>
        <dbReference type="ChEBI" id="CHEBI:57345"/>
        <dbReference type="ChEBI" id="CHEBI:70819"/>
    </reaction>
    <physiologicalReaction direction="left-to-right" evidence="2">
        <dbReference type="Rhea" id="RHEA:44985"/>
    </physiologicalReaction>
</comment>
<comment type="catalytic activity">
    <reaction evidence="2">
        <text>2-methylpropanoyl-CoA + (R)-carnitine = O-isobutanoyl-(R)-carnitine + CoA</text>
        <dbReference type="Rhea" id="RHEA:44988"/>
        <dbReference type="ChEBI" id="CHEBI:16347"/>
        <dbReference type="ChEBI" id="CHEBI:57287"/>
        <dbReference type="ChEBI" id="CHEBI:57338"/>
        <dbReference type="ChEBI" id="CHEBI:84838"/>
    </reaction>
    <physiologicalReaction direction="left-to-right" evidence="2">
        <dbReference type="Rhea" id="RHEA:44989"/>
    </physiologicalReaction>
</comment>
<comment type="catalytic activity">
    <reaction evidence="2">
        <text>2-methylbutanoyl-CoA + (R)-carnitine = O-2-methylbutanoyl-(R)-carnitine + CoA</text>
        <dbReference type="Rhea" id="RHEA:44992"/>
        <dbReference type="ChEBI" id="CHEBI:16347"/>
        <dbReference type="ChEBI" id="CHEBI:57287"/>
        <dbReference type="ChEBI" id="CHEBI:57336"/>
        <dbReference type="ChEBI" id="CHEBI:84840"/>
    </reaction>
    <physiologicalReaction direction="left-to-right" evidence="2">
        <dbReference type="Rhea" id="RHEA:44993"/>
    </physiologicalReaction>
</comment>
<comment type="catalytic activity">
    <reaction evidence="2">
        <text>acetoacetyl-CoA + (R)-carnitine = O-3-oxobutanoyl-(R)-carnitine + CoA</text>
        <dbReference type="Rhea" id="RHEA:44996"/>
        <dbReference type="ChEBI" id="CHEBI:16347"/>
        <dbReference type="ChEBI" id="CHEBI:57286"/>
        <dbReference type="ChEBI" id="CHEBI:57287"/>
        <dbReference type="ChEBI" id="CHEBI:84841"/>
    </reaction>
    <physiologicalReaction direction="left-to-right" evidence="2">
        <dbReference type="Rhea" id="RHEA:44997"/>
    </physiologicalReaction>
</comment>
<comment type="catalytic activity">
    <reaction evidence="2">
        <text>3-hydroxybutanoyl-CoA + (R)-carnitine = O-3-hydroxybutanoyl-(R)-carnitine + CoA</text>
        <dbReference type="Rhea" id="RHEA:45000"/>
        <dbReference type="ChEBI" id="CHEBI:16347"/>
        <dbReference type="ChEBI" id="CHEBI:57287"/>
        <dbReference type="ChEBI" id="CHEBI:78611"/>
        <dbReference type="ChEBI" id="CHEBI:84842"/>
    </reaction>
    <physiologicalReaction direction="left-to-right" evidence="2">
        <dbReference type="Rhea" id="RHEA:45001"/>
    </physiologicalReaction>
</comment>
<comment type="catalytic activity">
    <reaction evidence="2">
        <text>4,8-dimethylnonanoyl-CoA + (R)-carnitine = O-4,8-dimethylnonanoyl-(R)-carnitine + CoA</text>
        <dbReference type="Rhea" id="RHEA:44860"/>
        <dbReference type="ChEBI" id="CHEBI:16347"/>
        <dbReference type="ChEBI" id="CHEBI:57287"/>
        <dbReference type="ChEBI" id="CHEBI:77061"/>
        <dbReference type="ChEBI" id="CHEBI:84654"/>
    </reaction>
    <physiologicalReaction direction="left-to-right" evidence="2">
        <dbReference type="Rhea" id="RHEA:44861"/>
    </physiologicalReaction>
</comment>
<comment type="catalytic activity">
    <reaction evidence="2">
        <text>2,6-dimethylheptanoyl-CoA + (R)-carnitine = O-2,6-dimethylheptanoyl-(R)-carnitine + CoA</text>
        <dbReference type="Rhea" id="RHEA:45004"/>
        <dbReference type="ChEBI" id="CHEBI:16347"/>
        <dbReference type="ChEBI" id="CHEBI:57287"/>
        <dbReference type="ChEBI" id="CHEBI:84843"/>
        <dbReference type="ChEBI" id="CHEBI:84847"/>
    </reaction>
    <physiologicalReaction direction="left-to-right" evidence="2">
        <dbReference type="Rhea" id="RHEA:45005"/>
    </physiologicalReaction>
</comment>
<comment type="subunit">
    <text evidence="1">Monomer.</text>
</comment>
<comment type="subcellular location">
    <subcellularLocation>
        <location evidence="5">Endoplasmic reticulum</location>
    </subcellularLocation>
    <subcellularLocation>
        <location evidence="5">Peroxisome</location>
    </subcellularLocation>
    <subcellularLocation>
        <location evidence="5">Mitochondrion inner membrane</location>
        <topology evidence="5">Peripheral membrane protein</topology>
        <orientation evidence="5">Matrix side</orientation>
    </subcellularLocation>
</comment>
<comment type="similarity">
    <text evidence="5">Belongs to the carnitine/choline acetyltransferase family.</text>
</comment>
<dbReference type="EC" id="2.3.1.137" evidence="2"/>
<dbReference type="EC" id="2.3.1.7" evidence="2"/>
<dbReference type="EMBL" id="U08229">
    <property type="protein sequence ID" value="AAA80570.1"/>
    <property type="molecule type" value="mRNA"/>
</dbReference>
<dbReference type="PIR" id="S53369">
    <property type="entry name" value="S53369"/>
</dbReference>
<dbReference type="RefSeq" id="NP_001269768.1">
    <property type="nucleotide sequence ID" value="NM_001282839.1"/>
</dbReference>
<dbReference type="SMR" id="P52826"/>
<dbReference type="GeneID" id="102084317"/>
<dbReference type="KEGG" id="clv:102084317"/>
<dbReference type="CTD" id="1384"/>
<dbReference type="eggNOG" id="KOG3717">
    <property type="taxonomic scope" value="Eukaryota"/>
</dbReference>
<dbReference type="OrthoDB" id="306259at8782"/>
<dbReference type="GO" id="GO:0005783">
    <property type="term" value="C:endoplasmic reticulum"/>
    <property type="evidence" value="ECO:0007669"/>
    <property type="project" value="UniProtKB-SubCell"/>
</dbReference>
<dbReference type="GO" id="GO:0005743">
    <property type="term" value="C:mitochondrial inner membrane"/>
    <property type="evidence" value="ECO:0007669"/>
    <property type="project" value="UniProtKB-SubCell"/>
</dbReference>
<dbReference type="GO" id="GO:0005777">
    <property type="term" value="C:peroxisome"/>
    <property type="evidence" value="ECO:0007669"/>
    <property type="project" value="UniProtKB-SubCell"/>
</dbReference>
<dbReference type="GO" id="GO:0003997">
    <property type="term" value="F:acyl-CoA oxidase activity"/>
    <property type="evidence" value="ECO:0000250"/>
    <property type="project" value="UniProtKB"/>
</dbReference>
<dbReference type="GO" id="GO:0004092">
    <property type="term" value="F:carnitine O-acetyltransferase activity"/>
    <property type="evidence" value="ECO:0000250"/>
    <property type="project" value="UniProtKB"/>
</dbReference>
<dbReference type="GO" id="GO:0008458">
    <property type="term" value="F:carnitine O-octanoyltransferase activity"/>
    <property type="evidence" value="ECO:0007669"/>
    <property type="project" value="UniProtKB-EC"/>
</dbReference>
<dbReference type="GO" id="GO:0019254">
    <property type="term" value="P:carnitine metabolic process, CoA-linked"/>
    <property type="evidence" value="ECO:0000250"/>
    <property type="project" value="UniProtKB"/>
</dbReference>
<dbReference type="GO" id="GO:0033540">
    <property type="term" value="P:fatty acid beta-oxidation using acyl-CoA oxidase"/>
    <property type="evidence" value="ECO:0000250"/>
    <property type="project" value="UniProtKB"/>
</dbReference>
<dbReference type="GO" id="GO:0051791">
    <property type="term" value="P:medium-chain fatty acid metabolic process"/>
    <property type="evidence" value="ECO:0000250"/>
    <property type="project" value="UniProtKB"/>
</dbReference>
<dbReference type="GO" id="GO:0046459">
    <property type="term" value="P:short-chain fatty acid metabolic process"/>
    <property type="evidence" value="ECO:0000250"/>
    <property type="project" value="UniProtKB"/>
</dbReference>
<dbReference type="FunFam" id="3.30.559.10:FF:000001">
    <property type="entry name" value="Carnitine O-acetyltransferase"/>
    <property type="match status" value="1"/>
</dbReference>
<dbReference type="FunFam" id="3.30.559.70:FF:000002">
    <property type="entry name" value="Carnitine O-acetyltransferase"/>
    <property type="match status" value="1"/>
</dbReference>
<dbReference type="Gene3D" id="3.30.559.10">
    <property type="entry name" value="Chloramphenicol acetyltransferase-like domain"/>
    <property type="match status" value="1"/>
</dbReference>
<dbReference type="Gene3D" id="3.30.559.70">
    <property type="entry name" value="Choline/Carnitine o-acyltransferase, domain 2"/>
    <property type="match status" value="1"/>
</dbReference>
<dbReference type="InterPro" id="IPR000542">
    <property type="entry name" value="Carn_acyl_trans"/>
</dbReference>
<dbReference type="InterPro" id="IPR023213">
    <property type="entry name" value="CAT-like_dom_sf"/>
</dbReference>
<dbReference type="InterPro" id="IPR039551">
    <property type="entry name" value="Cho/carn_acyl_trans"/>
</dbReference>
<dbReference type="InterPro" id="IPR042231">
    <property type="entry name" value="Cho/carn_acyl_trans_2"/>
</dbReference>
<dbReference type="PANTHER" id="PTHR22589:SF50">
    <property type="entry name" value="CARNITINE O-ACETYLTRANSFERASE"/>
    <property type="match status" value="1"/>
</dbReference>
<dbReference type="PANTHER" id="PTHR22589">
    <property type="entry name" value="CARNITINE O-ACYLTRANSFERASE"/>
    <property type="match status" value="1"/>
</dbReference>
<dbReference type="Pfam" id="PF00755">
    <property type="entry name" value="Carn_acyltransf"/>
    <property type="match status" value="1"/>
</dbReference>
<dbReference type="SUPFAM" id="SSF52777">
    <property type="entry name" value="CoA-dependent acyltransferases"/>
    <property type="match status" value="2"/>
</dbReference>
<dbReference type="PROSITE" id="PS00439">
    <property type="entry name" value="ACYLTRANSF_C_1"/>
    <property type="match status" value="1"/>
</dbReference>
<dbReference type="PROSITE" id="PS00440">
    <property type="entry name" value="ACYLTRANSF_C_2"/>
    <property type="match status" value="1"/>
</dbReference>
<proteinExistence type="evidence at protein level"/>
<organism>
    <name type="scientific">Columba livia</name>
    <name type="common">Rock dove</name>
    <dbReference type="NCBI Taxonomy" id="8932"/>
    <lineage>
        <taxon>Eukaryota</taxon>
        <taxon>Metazoa</taxon>
        <taxon>Chordata</taxon>
        <taxon>Craniata</taxon>
        <taxon>Vertebrata</taxon>
        <taxon>Euteleostomi</taxon>
        <taxon>Archelosauria</taxon>
        <taxon>Archosauria</taxon>
        <taxon>Dinosauria</taxon>
        <taxon>Saurischia</taxon>
        <taxon>Theropoda</taxon>
        <taxon>Coelurosauria</taxon>
        <taxon>Aves</taxon>
        <taxon>Neognathae</taxon>
        <taxon>Neoaves</taxon>
        <taxon>Columbimorphae</taxon>
        <taxon>Columbiformes</taxon>
        <taxon>Columbidae</taxon>
        <taxon>Columba</taxon>
    </lineage>
</organism>